<accession>P14534</accession>
<protein>
    <recommendedName>
        <fullName>Short neurotoxin 2</fullName>
    </recommendedName>
    <alternativeName>
        <fullName>Fasciatoxin</fullName>
    </alternativeName>
    <alternativeName>
        <fullName>Toxin V-II-2</fullName>
    </alternativeName>
</protein>
<feature type="chain" id="PRO_0000093572" description="Short neurotoxin 2" evidence="2">
    <location>
        <begin position="1"/>
        <end position="63"/>
    </location>
</feature>
<feature type="disulfide bond" evidence="1">
    <location>
        <begin position="3"/>
        <end position="21"/>
    </location>
</feature>
<feature type="disulfide bond" evidence="1">
    <location>
        <begin position="15"/>
        <end position="39"/>
    </location>
</feature>
<feature type="disulfide bond" evidence="1">
    <location>
        <begin position="43"/>
        <end position="49"/>
    </location>
</feature>
<feature type="disulfide bond" evidence="1">
    <location>
        <begin position="50"/>
        <end position="55"/>
    </location>
</feature>
<organism>
    <name type="scientific">Bungarus fasciatus</name>
    <name type="common">Banded krait</name>
    <name type="synonym">Pseudoboa fasciata</name>
    <dbReference type="NCBI Taxonomy" id="8613"/>
    <lineage>
        <taxon>Eukaryota</taxon>
        <taxon>Metazoa</taxon>
        <taxon>Chordata</taxon>
        <taxon>Craniata</taxon>
        <taxon>Vertebrata</taxon>
        <taxon>Euteleostomi</taxon>
        <taxon>Lepidosauria</taxon>
        <taxon>Squamata</taxon>
        <taxon>Bifurcata</taxon>
        <taxon>Unidentata</taxon>
        <taxon>Episquamata</taxon>
        <taxon>Toxicofera</taxon>
        <taxon>Serpentes</taxon>
        <taxon>Colubroidea</taxon>
        <taxon>Elapidae</taxon>
        <taxon>Bungarinae</taxon>
        <taxon>Bungarus</taxon>
    </lineage>
</organism>
<evidence type="ECO:0000250" key="1">
    <source>
        <dbReference type="UniProtKB" id="P01467"/>
    </source>
</evidence>
<evidence type="ECO:0000269" key="2">
    <source>
    </source>
</evidence>
<evidence type="ECO:0000305" key="3"/>
<dbReference type="PIR" id="S03864">
    <property type="entry name" value="S03864"/>
</dbReference>
<dbReference type="SMR" id="P14534"/>
<dbReference type="GO" id="GO:0005576">
    <property type="term" value="C:extracellular region"/>
    <property type="evidence" value="ECO:0007669"/>
    <property type="project" value="UniProtKB-SubCell"/>
</dbReference>
<dbReference type="GO" id="GO:0090729">
    <property type="term" value="F:toxin activity"/>
    <property type="evidence" value="ECO:0007669"/>
    <property type="project" value="UniProtKB-KW"/>
</dbReference>
<dbReference type="Gene3D" id="2.10.60.10">
    <property type="entry name" value="CD59"/>
    <property type="match status" value="1"/>
</dbReference>
<dbReference type="InterPro" id="IPR045860">
    <property type="entry name" value="Snake_toxin-like_sf"/>
</dbReference>
<dbReference type="SUPFAM" id="SSF57302">
    <property type="entry name" value="Snake toxin-like"/>
    <property type="match status" value="1"/>
</dbReference>
<sequence length="63" mass="6847">LKCHKAQFPNIETQCKWQTLCFQRDVKPHPSSMIVLRGCTSSCGKGAMCCATDLCNGPSTPST</sequence>
<comment type="function">
    <text>Blocks both the muscle-twitch response to nerve stimulation and the response to exogenous acetylcholine.</text>
</comment>
<comment type="subcellular location">
    <subcellularLocation>
        <location>Secreted</location>
    </subcellularLocation>
</comment>
<comment type="tissue specificity">
    <text>Expressed by the venom gland.</text>
</comment>
<comment type="miscellaneous">
    <text>In contrast to other snake toxins the action of this toxin is reversible.</text>
</comment>
<comment type="miscellaneous">
    <text>Unusual amino acid sequence distinctly different from other short-chain type toxins.</text>
</comment>
<comment type="miscellaneous">
    <text evidence="3">Is classified as a P-type cytotoxin, since a proline residue stands at position 30 (Pro-31 in standard classification).</text>
</comment>
<comment type="similarity">
    <text evidence="3">Belongs to the three-finger toxin family. Short-chain subfamily. Orphan group XVIII sub-subfamily.</text>
</comment>
<proteinExistence type="evidence at protein level"/>
<name>3SOI2_BUNFA</name>
<keyword id="KW-0903">Direct protein sequencing</keyword>
<keyword id="KW-1015">Disulfide bond</keyword>
<keyword id="KW-0528">Neurotoxin</keyword>
<keyword id="KW-0629">Postsynaptic neurotoxin</keyword>
<keyword id="KW-0964">Secreted</keyword>
<keyword id="KW-0800">Toxin</keyword>
<reference key="1">
    <citation type="journal article" date="1989" name="Biochem. J.">
        <title>Unusual amino acid sequence of fasciatoxin, a weak reversibly acting neurotoxin in the venom of the banded krait, Bungarus fasciatus.</title>
        <authorList>
            <person name="Liu C.-S."/>
            <person name="Hsiao P.-W."/>
            <person name="Chang C.-S."/>
            <person name="Tzeng M.-C."/>
            <person name="Lo T.-B."/>
        </authorList>
    </citation>
    <scope>PROTEIN SEQUENCE</scope>
    <source>
        <tissue>Venom</tissue>
    </source>
</reference>